<protein>
    <recommendedName>
        <fullName>Probable cytochrome P450 517A1</fullName>
        <ecNumber>1.14.-.-</ecNumber>
    </recommendedName>
</protein>
<comment type="cofactor">
    <cofactor evidence="1">
        <name>heme</name>
        <dbReference type="ChEBI" id="CHEBI:30413"/>
    </cofactor>
</comment>
<comment type="subcellular location">
    <subcellularLocation>
        <location evidence="4">Membrane</location>
        <topology evidence="4">Single-pass membrane protein</topology>
    </subcellularLocation>
</comment>
<comment type="developmental stage">
    <text evidence="3">Prestalk specific.</text>
</comment>
<comment type="similarity">
    <text evidence="4">Belongs to the cytochrome P450 family.</text>
</comment>
<accession>Q54QD2</accession>
<organism>
    <name type="scientific">Dictyostelium discoideum</name>
    <name type="common">Social amoeba</name>
    <dbReference type="NCBI Taxonomy" id="44689"/>
    <lineage>
        <taxon>Eukaryota</taxon>
        <taxon>Amoebozoa</taxon>
        <taxon>Evosea</taxon>
        <taxon>Eumycetozoa</taxon>
        <taxon>Dictyostelia</taxon>
        <taxon>Dictyosteliales</taxon>
        <taxon>Dictyosteliaceae</taxon>
        <taxon>Dictyostelium</taxon>
    </lineage>
</organism>
<keyword id="KW-0349">Heme</keyword>
<keyword id="KW-0408">Iron</keyword>
<keyword id="KW-0472">Membrane</keyword>
<keyword id="KW-0479">Metal-binding</keyword>
<keyword id="KW-0503">Monooxygenase</keyword>
<keyword id="KW-0560">Oxidoreductase</keyword>
<keyword id="KW-1185">Reference proteome</keyword>
<keyword id="KW-0812">Transmembrane</keyword>
<keyword id="KW-1133">Transmembrane helix</keyword>
<evidence type="ECO:0000250" key="1"/>
<evidence type="ECO:0000255" key="2"/>
<evidence type="ECO:0000269" key="3">
    <source>
    </source>
</evidence>
<evidence type="ECO:0000305" key="4"/>
<feature type="chain" id="PRO_0000318827" description="Probable cytochrome P450 517A1">
    <location>
        <begin position="1"/>
        <end position="483"/>
    </location>
</feature>
<feature type="transmembrane region" description="Helical" evidence="2">
    <location>
        <begin position="1"/>
        <end position="21"/>
    </location>
</feature>
<feature type="binding site" description="axial binding residue" evidence="1">
    <location>
        <position position="429"/>
    </location>
    <ligand>
        <name>heme</name>
        <dbReference type="ChEBI" id="CHEBI:30413"/>
    </ligand>
    <ligandPart>
        <name>Fe</name>
        <dbReference type="ChEBI" id="CHEBI:18248"/>
    </ligandPart>
</feature>
<gene>
    <name type="primary">cyp517A1</name>
    <name type="synonym">ostA</name>
    <name type="ORF">DDB_G0283929</name>
</gene>
<name>C5171_DICDI</name>
<reference key="1">
    <citation type="journal article" date="2005" name="Nature">
        <title>The genome of the social amoeba Dictyostelium discoideum.</title>
        <authorList>
            <person name="Eichinger L."/>
            <person name="Pachebat J.A."/>
            <person name="Gloeckner G."/>
            <person name="Rajandream M.A."/>
            <person name="Sucgang R."/>
            <person name="Berriman M."/>
            <person name="Song J."/>
            <person name="Olsen R."/>
            <person name="Szafranski K."/>
            <person name="Xu Q."/>
            <person name="Tunggal B."/>
            <person name="Kummerfeld S."/>
            <person name="Madera M."/>
            <person name="Konfortov B.A."/>
            <person name="Rivero F."/>
            <person name="Bankier A.T."/>
            <person name="Lehmann R."/>
            <person name="Hamlin N."/>
            <person name="Davies R."/>
            <person name="Gaudet P."/>
            <person name="Fey P."/>
            <person name="Pilcher K."/>
            <person name="Chen G."/>
            <person name="Saunders D."/>
            <person name="Sodergren E.J."/>
            <person name="Davis P."/>
            <person name="Kerhornou A."/>
            <person name="Nie X."/>
            <person name="Hall N."/>
            <person name="Anjard C."/>
            <person name="Hemphill L."/>
            <person name="Bason N."/>
            <person name="Farbrother P."/>
            <person name="Desany B."/>
            <person name="Just E."/>
            <person name="Morio T."/>
            <person name="Rost R."/>
            <person name="Churcher C.M."/>
            <person name="Cooper J."/>
            <person name="Haydock S."/>
            <person name="van Driessche N."/>
            <person name="Cronin A."/>
            <person name="Goodhead I."/>
            <person name="Muzny D.M."/>
            <person name="Mourier T."/>
            <person name="Pain A."/>
            <person name="Lu M."/>
            <person name="Harper D."/>
            <person name="Lindsay R."/>
            <person name="Hauser H."/>
            <person name="James K.D."/>
            <person name="Quiles M."/>
            <person name="Madan Babu M."/>
            <person name="Saito T."/>
            <person name="Buchrieser C."/>
            <person name="Wardroper A."/>
            <person name="Felder M."/>
            <person name="Thangavelu M."/>
            <person name="Johnson D."/>
            <person name="Knights A."/>
            <person name="Loulseged H."/>
            <person name="Mungall K.L."/>
            <person name="Oliver K."/>
            <person name="Price C."/>
            <person name="Quail M.A."/>
            <person name="Urushihara H."/>
            <person name="Hernandez J."/>
            <person name="Rabbinowitsch E."/>
            <person name="Steffen D."/>
            <person name="Sanders M."/>
            <person name="Ma J."/>
            <person name="Kohara Y."/>
            <person name="Sharp S."/>
            <person name="Simmonds M.N."/>
            <person name="Spiegler S."/>
            <person name="Tivey A."/>
            <person name="Sugano S."/>
            <person name="White B."/>
            <person name="Walker D."/>
            <person name="Woodward J.R."/>
            <person name="Winckler T."/>
            <person name="Tanaka Y."/>
            <person name="Shaulsky G."/>
            <person name="Schleicher M."/>
            <person name="Weinstock G.M."/>
            <person name="Rosenthal A."/>
            <person name="Cox E.C."/>
            <person name="Chisholm R.L."/>
            <person name="Gibbs R.A."/>
            <person name="Loomis W.F."/>
            <person name="Platzer M."/>
            <person name="Kay R.R."/>
            <person name="Williams J.G."/>
            <person name="Dear P.H."/>
            <person name="Noegel A.A."/>
            <person name="Barrell B.G."/>
            <person name="Kuspa A."/>
        </authorList>
    </citation>
    <scope>NUCLEOTIDE SEQUENCE [LARGE SCALE GENOMIC DNA]</scope>
    <source>
        <strain>AX4</strain>
    </source>
</reference>
<reference key="2">
    <citation type="journal article" date="2001" name="Mol. Biol. Cell">
        <title>Expression patterns of cell-type-specific genes in Dictyostelium.</title>
        <authorList>
            <person name="Iranfar N."/>
            <person name="Fuller D."/>
            <person name="Sasik R."/>
            <person name="Hwa T."/>
            <person name="Laub M."/>
            <person name="Loomis W.F."/>
        </authorList>
    </citation>
    <scope>DEVELOPMENTAL STAGE</scope>
</reference>
<proteinExistence type="evidence at transcript level"/>
<dbReference type="EC" id="1.14.-.-"/>
<dbReference type="EMBL" id="AAFI02000058">
    <property type="protein sequence ID" value="EAL65452.1"/>
    <property type="molecule type" value="Genomic_DNA"/>
</dbReference>
<dbReference type="RefSeq" id="XP_638812.1">
    <property type="nucleotide sequence ID" value="XM_633720.1"/>
</dbReference>
<dbReference type="SMR" id="Q54QD2"/>
<dbReference type="FunCoup" id="Q54QD2">
    <property type="interactions" value="5"/>
</dbReference>
<dbReference type="STRING" id="44689.Q54QD2"/>
<dbReference type="PaxDb" id="44689-DDB0232394"/>
<dbReference type="EnsemblProtists" id="EAL65452">
    <property type="protein sequence ID" value="EAL65452"/>
    <property type="gene ID" value="DDB_G0283929"/>
</dbReference>
<dbReference type="GeneID" id="8624336"/>
<dbReference type="KEGG" id="ddi:DDB_G0283929"/>
<dbReference type="dictyBase" id="DDB_G0283929">
    <property type="gene designation" value="cyp517A1"/>
</dbReference>
<dbReference type="VEuPathDB" id="AmoebaDB:DDB_G0283929"/>
<dbReference type="eggNOG" id="KOG0156">
    <property type="taxonomic scope" value="Eukaryota"/>
</dbReference>
<dbReference type="HOGENOM" id="CLU_001570_22_0_1"/>
<dbReference type="InParanoid" id="Q54QD2"/>
<dbReference type="PhylomeDB" id="Q54QD2"/>
<dbReference type="Reactome" id="R-DDI-211935">
    <property type="pathway name" value="Fatty acids"/>
</dbReference>
<dbReference type="Reactome" id="R-DDI-211945">
    <property type="pathway name" value="Phase I - Functionalization of compounds"/>
</dbReference>
<dbReference type="Reactome" id="R-DDI-211958">
    <property type="pathway name" value="Miscellaneous substrates"/>
</dbReference>
<dbReference type="Reactome" id="R-DDI-211981">
    <property type="pathway name" value="Xenobiotics"/>
</dbReference>
<dbReference type="Reactome" id="R-DDI-211999">
    <property type="pathway name" value="CYP2E1 reactions"/>
</dbReference>
<dbReference type="Reactome" id="R-DDI-2142670">
    <property type="pathway name" value="Synthesis of epoxy (EET) and dihydroxyeicosatrienoic acids (DHET)"/>
</dbReference>
<dbReference type="Reactome" id="R-DDI-2142816">
    <property type="pathway name" value="Synthesis of (16-20)-hydroxyeicosatetraenoic acids (HETE)"/>
</dbReference>
<dbReference type="Reactome" id="R-DDI-5423646">
    <property type="pathway name" value="Aflatoxin activation and detoxification"/>
</dbReference>
<dbReference type="Reactome" id="R-DDI-9027307">
    <property type="pathway name" value="Biosynthesis of maresin-like SPMs"/>
</dbReference>
<dbReference type="Reactome" id="R-DDI-9749641">
    <property type="pathway name" value="Aspirin ADME"/>
</dbReference>
<dbReference type="Reactome" id="R-DDI-9753281">
    <property type="pathway name" value="Paracetamol ADME"/>
</dbReference>
<dbReference type="PRO" id="PR:Q54QD2"/>
<dbReference type="Proteomes" id="UP000002195">
    <property type="component" value="Chromosome 4"/>
</dbReference>
<dbReference type="GO" id="GO:0016020">
    <property type="term" value="C:membrane"/>
    <property type="evidence" value="ECO:0007669"/>
    <property type="project" value="UniProtKB-SubCell"/>
</dbReference>
<dbReference type="GO" id="GO:0020037">
    <property type="term" value="F:heme binding"/>
    <property type="evidence" value="ECO:0007669"/>
    <property type="project" value="InterPro"/>
</dbReference>
<dbReference type="GO" id="GO:0005506">
    <property type="term" value="F:iron ion binding"/>
    <property type="evidence" value="ECO:0007669"/>
    <property type="project" value="InterPro"/>
</dbReference>
<dbReference type="GO" id="GO:0004497">
    <property type="term" value="F:monooxygenase activity"/>
    <property type="evidence" value="ECO:0007669"/>
    <property type="project" value="UniProtKB-KW"/>
</dbReference>
<dbReference type="GO" id="GO:0016705">
    <property type="term" value="F:oxidoreductase activity, acting on paired donors, with incorporation or reduction of molecular oxygen"/>
    <property type="evidence" value="ECO:0007669"/>
    <property type="project" value="InterPro"/>
</dbReference>
<dbReference type="CDD" id="cd20617">
    <property type="entry name" value="CYP1_2-like"/>
    <property type="match status" value="1"/>
</dbReference>
<dbReference type="FunFam" id="1.10.630.10:FF:000078">
    <property type="entry name" value="Probable cytochrome P450 515A1"/>
    <property type="match status" value="1"/>
</dbReference>
<dbReference type="Gene3D" id="1.10.630.10">
    <property type="entry name" value="Cytochrome P450"/>
    <property type="match status" value="1"/>
</dbReference>
<dbReference type="InterPro" id="IPR001128">
    <property type="entry name" value="Cyt_P450"/>
</dbReference>
<dbReference type="InterPro" id="IPR017972">
    <property type="entry name" value="Cyt_P450_CS"/>
</dbReference>
<dbReference type="InterPro" id="IPR002401">
    <property type="entry name" value="Cyt_P450_E_grp-I"/>
</dbReference>
<dbReference type="InterPro" id="IPR036396">
    <property type="entry name" value="Cyt_P450_sf"/>
</dbReference>
<dbReference type="PANTHER" id="PTHR24303:SF31">
    <property type="entry name" value="CYTOCHROME P450 307A1-RELATED"/>
    <property type="match status" value="1"/>
</dbReference>
<dbReference type="PANTHER" id="PTHR24303">
    <property type="entry name" value="HEME-BINDING MONOOXYGENASE FAMILY"/>
    <property type="match status" value="1"/>
</dbReference>
<dbReference type="Pfam" id="PF00067">
    <property type="entry name" value="p450"/>
    <property type="match status" value="1"/>
</dbReference>
<dbReference type="PRINTS" id="PR00463">
    <property type="entry name" value="EP450I"/>
</dbReference>
<dbReference type="SUPFAM" id="SSF48264">
    <property type="entry name" value="Cytochrome P450"/>
    <property type="match status" value="1"/>
</dbReference>
<dbReference type="PROSITE" id="PS00086">
    <property type="entry name" value="CYTOCHROME_P450"/>
    <property type="match status" value="1"/>
</dbReference>
<sequence>MEIINVFLFLIILFLVKDFVKKNKKIHTKSPSGPIAFPILGNVVQIRFWELFKIQEHELFGGYSKKYNGVVRAWFGERLFFFVSNYDVVKYFQKDENFHNRPSVLVPGWRYASSNGLGVMSSSDDKWKRAKSSVSQSLRVRTTKKLMEEKAIEFIDSLEKISNNNEIFYPKGHIQGYACSMLFKYMFNQDLSVESGMSRTIGNAVEHVFGNLSKLTAFDCFEIFSPLYDWFFTRRLKGCDIVRQIISSQNENHLKSIDPSKPRDLMDDLLIEYGLNEITKEDTMQINQICFDIFGPAVGTVTITMNWVILQLCNRPELQEIAYQEIKKAVKDDEYVNLNHKQNAPYIVAFIKETMRLCSNGFGLPRTAKNDQICGDFFIPKDAIIFINYLEISQNEEIFKNAKEFNPTRYLDESLPVPNIHFGVGQRACPGRFVAIDKMFLGISNLLLKYKLKTQNGEKIDDSIQFSVSLKAKDYGIKLEKRI</sequence>